<reference key="1">
    <citation type="journal article" date="2004" name="Nat. Genet.">
        <title>Comparison of genome degradation in Paratyphi A and Typhi, human-restricted serovars of Salmonella enterica that cause typhoid.</title>
        <authorList>
            <person name="McClelland M."/>
            <person name="Sanderson K.E."/>
            <person name="Clifton S.W."/>
            <person name="Latreille P."/>
            <person name="Porwollik S."/>
            <person name="Sabo A."/>
            <person name="Meyer R."/>
            <person name="Bieri T."/>
            <person name="Ozersky P."/>
            <person name="McLellan M."/>
            <person name="Harkins C.R."/>
            <person name="Wang C."/>
            <person name="Nguyen C."/>
            <person name="Berghoff A."/>
            <person name="Elliott G."/>
            <person name="Kohlberg S."/>
            <person name="Strong C."/>
            <person name="Du F."/>
            <person name="Carter J."/>
            <person name="Kremizki C."/>
            <person name="Layman D."/>
            <person name="Leonard S."/>
            <person name="Sun H."/>
            <person name="Fulton L."/>
            <person name="Nash W."/>
            <person name="Miner T."/>
            <person name="Minx P."/>
            <person name="Delehaunty K."/>
            <person name="Fronick C."/>
            <person name="Magrini V."/>
            <person name="Nhan M."/>
            <person name="Warren W."/>
            <person name="Florea L."/>
            <person name="Spieth J."/>
            <person name="Wilson R.K."/>
        </authorList>
    </citation>
    <scope>NUCLEOTIDE SEQUENCE [LARGE SCALE GENOMIC DNA]</scope>
    <source>
        <strain>ATCC 9150 / SARB42</strain>
    </source>
</reference>
<protein>
    <recommendedName>
        <fullName evidence="1">Cyclic pyranopterin monophosphate synthase</fullName>
        <ecNumber evidence="1">4.6.1.17</ecNumber>
    </recommendedName>
    <alternativeName>
        <fullName evidence="1">Molybdenum cofactor biosynthesis protein C</fullName>
    </alternativeName>
</protein>
<dbReference type="EC" id="4.6.1.17" evidence="1"/>
<dbReference type="EMBL" id="CP000026">
    <property type="protein sequence ID" value="AAV77858.1"/>
    <property type="molecule type" value="Genomic_DNA"/>
</dbReference>
<dbReference type="RefSeq" id="WP_000080894.1">
    <property type="nucleotide sequence ID" value="NC_006511.1"/>
</dbReference>
<dbReference type="SMR" id="Q5PG39"/>
<dbReference type="KEGG" id="spt:SPA1948"/>
<dbReference type="HOGENOM" id="CLU_074693_1_1_6"/>
<dbReference type="UniPathway" id="UPA00344"/>
<dbReference type="Proteomes" id="UP000008185">
    <property type="component" value="Chromosome"/>
</dbReference>
<dbReference type="GO" id="GO:0061799">
    <property type="term" value="F:cyclic pyranopterin monophosphate synthase activity"/>
    <property type="evidence" value="ECO:0007669"/>
    <property type="project" value="UniProtKB-UniRule"/>
</dbReference>
<dbReference type="GO" id="GO:0006777">
    <property type="term" value="P:Mo-molybdopterin cofactor biosynthetic process"/>
    <property type="evidence" value="ECO:0007669"/>
    <property type="project" value="UniProtKB-UniRule"/>
</dbReference>
<dbReference type="CDD" id="cd01420">
    <property type="entry name" value="MoaC_PE"/>
    <property type="match status" value="1"/>
</dbReference>
<dbReference type="FunFam" id="3.30.70.640:FF:000001">
    <property type="entry name" value="Cyclic pyranopterin monophosphate synthase"/>
    <property type="match status" value="1"/>
</dbReference>
<dbReference type="Gene3D" id="3.30.70.640">
    <property type="entry name" value="Molybdopterin cofactor biosynthesis C (MoaC) domain"/>
    <property type="match status" value="1"/>
</dbReference>
<dbReference type="HAMAP" id="MF_01224_B">
    <property type="entry name" value="MoaC_B"/>
    <property type="match status" value="1"/>
</dbReference>
<dbReference type="InterPro" id="IPR023045">
    <property type="entry name" value="MoaC"/>
</dbReference>
<dbReference type="InterPro" id="IPR047594">
    <property type="entry name" value="MoaC_bact/euk"/>
</dbReference>
<dbReference type="InterPro" id="IPR036522">
    <property type="entry name" value="MoaC_sf"/>
</dbReference>
<dbReference type="InterPro" id="IPR050105">
    <property type="entry name" value="MoCo_biosynth_MoaA/MoaC"/>
</dbReference>
<dbReference type="InterPro" id="IPR002820">
    <property type="entry name" value="Mopterin_CF_biosynth-C_dom"/>
</dbReference>
<dbReference type="NCBIfam" id="TIGR00581">
    <property type="entry name" value="moaC"/>
    <property type="match status" value="1"/>
</dbReference>
<dbReference type="NCBIfam" id="NF006870">
    <property type="entry name" value="PRK09364.1"/>
    <property type="match status" value="1"/>
</dbReference>
<dbReference type="PANTHER" id="PTHR22960">
    <property type="entry name" value="MOLYBDOPTERIN COFACTOR SYNTHESIS PROTEIN A"/>
    <property type="match status" value="1"/>
</dbReference>
<dbReference type="Pfam" id="PF01967">
    <property type="entry name" value="MoaC"/>
    <property type="match status" value="1"/>
</dbReference>
<dbReference type="SUPFAM" id="SSF55040">
    <property type="entry name" value="Molybdenum cofactor biosynthesis protein C, MoaC"/>
    <property type="match status" value="1"/>
</dbReference>
<evidence type="ECO:0000255" key="1">
    <source>
        <dbReference type="HAMAP-Rule" id="MF_01224"/>
    </source>
</evidence>
<name>MOAC_SALPA</name>
<feature type="chain" id="PRO_1000054133" description="Cyclic pyranopterin monophosphate synthase">
    <location>
        <begin position="1"/>
        <end position="161"/>
    </location>
</feature>
<feature type="active site" evidence="1">
    <location>
        <position position="128"/>
    </location>
</feature>
<feature type="binding site" evidence="1">
    <location>
        <begin position="75"/>
        <end position="77"/>
    </location>
    <ligand>
        <name>substrate</name>
    </ligand>
</feature>
<feature type="binding site" evidence="1">
    <location>
        <begin position="113"/>
        <end position="114"/>
    </location>
    <ligand>
        <name>substrate</name>
    </ligand>
</feature>
<comment type="function">
    <text evidence="1">Catalyzes the conversion of (8S)-3',8-cyclo-7,8-dihydroguanosine 5'-triphosphate to cyclic pyranopterin monophosphate (cPMP).</text>
</comment>
<comment type="catalytic activity">
    <reaction evidence="1">
        <text>(8S)-3',8-cyclo-7,8-dihydroguanosine 5'-triphosphate = cyclic pyranopterin phosphate + diphosphate</text>
        <dbReference type="Rhea" id="RHEA:49580"/>
        <dbReference type="ChEBI" id="CHEBI:33019"/>
        <dbReference type="ChEBI" id="CHEBI:59648"/>
        <dbReference type="ChEBI" id="CHEBI:131766"/>
        <dbReference type="EC" id="4.6.1.17"/>
    </reaction>
</comment>
<comment type="pathway">
    <text evidence="1">Cofactor biosynthesis; molybdopterin biosynthesis.</text>
</comment>
<comment type="subunit">
    <text evidence="1">Homohexamer; trimer of dimers.</text>
</comment>
<comment type="similarity">
    <text evidence="1">Belongs to the MoaC family.</text>
</comment>
<accession>Q5PG39</accession>
<sequence length="161" mass="17443">MSQLTHINAAGEAHMVDVSAKAETVREARAEAFVTMRSETLAMIVDGKHHKGDVFATARIAGIQAAKRTWELIPLCHPLLLSKVEIQLQAEPEHNRVRIESLCRLTGKTGVEMEALTAASVAALTIYDMCKAVQKDMVIGPVRLLAKSGGKSGDFKVDAHD</sequence>
<proteinExistence type="inferred from homology"/>
<keyword id="KW-0456">Lyase</keyword>
<keyword id="KW-0501">Molybdenum cofactor biosynthesis</keyword>
<gene>
    <name evidence="1" type="primary">moaC</name>
    <name type="ordered locus">SPA1948</name>
</gene>
<organism>
    <name type="scientific">Salmonella paratyphi A (strain ATCC 9150 / SARB42)</name>
    <dbReference type="NCBI Taxonomy" id="295319"/>
    <lineage>
        <taxon>Bacteria</taxon>
        <taxon>Pseudomonadati</taxon>
        <taxon>Pseudomonadota</taxon>
        <taxon>Gammaproteobacteria</taxon>
        <taxon>Enterobacterales</taxon>
        <taxon>Enterobacteriaceae</taxon>
        <taxon>Salmonella</taxon>
    </lineage>
</organism>